<dbReference type="EC" id="6.3.2.4" evidence="2"/>
<dbReference type="EMBL" id="BA000040">
    <property type="protein sequence ID" value="BAC51703.1"/>
    <property type="molecule type" value="Genomic_DNA"/>
</dbReference>
<dbReference type="RefSeq" id="NP_773078.1">
    <property type="nucleotide sequence ID" value="NC_004463.1"/>
</dbReference>
<dbReference type="RefSeq" id="WP_011089178.1">
    <property type="nucleotide sequence ID" value="NC_004463.1"/>
</dbReference>
<dbReference type="SMR" id="Q89GA7"/>
<dbReference type="STRING" id="224911.AAV28_29750"/>
<dbReference type="EnsemblBacteria" id="BAC51703">
    <property type="protein sequence ID" value="BAC51703"/>
    <property type="gene ID" value="BAC51703"/>
</dbReference>
<dbReference type="GeneID" id="46493414"/>
<dbReference type="KEGG" id="bja:blr6438"/>
<dbReference type="PATRIC" id="fig|224911.44.peg.6424"/>
<dbReference type="eggNOG" id="COG1181">
    <property type="taxonomic scope" value="Bacteria"/>
</dbReference>
<dbReference type="HOGENOM" id="CLU_039268_0_0_5"/>
<dbReference type="InParanoid" id="Q89GA7"/>
<dbReference type="OrthoDB" id="9813261at2"/>
<dbReference type="PhylomeDB" id="Q89GA7"/>
<dbReference type="UniPathway" id="UPA00219"/>
<dbReference type="Proteomes" id="UP000002526">
    <property type="component" value="Chromosome"/>
</dbReference>
<dbReference type="GO" id="GO:0005829">
    <property type="term" value="C:cytosol"/>
    <property type="evidence" value="ECO:0000318"/>
    <property type="project" value="GO_Central"/>
</dbReference>
<dbReference type="GO" id="GO:0005524">
    <property type="term" value="F:ATP binding"/>
    <property type="evidence" value="ECO:0007669"/>
    <property type="project" value="UniProtKB-KW"/>
</dbReference>
<dbReference type="GO" id="GO:0008716">
    <property type="term" value="F:D-alanine-D-alanine ligase activity"/>
    <property type="evidence" value="ECO:0000318"/>
    <property type="project" value="GO_Central"/>
</dbReference>
<dbReference type="GO" id="GO:0046872">
    <property type="term" value="F:metal ion binding"/>
    <property type="evidence" value="ECO:0007669"/>
    <property type="project" value="UniProtKB-KW"/>
</dbReference>
<dbReference type="GO" id="GO:0071555">
    <property type="term" value="P:cell wall organization"/>
    <property type="evidence" value="ECO:0007669"/>
    <property type="project" value="UniProtKB-KW"/>
</dbReference>
<dbReference type="GO" id="GO:0009252">
    <property type="term" value="P:peptidoglycan biosynthetic process"/>
    <property type="evidence" value="ECO:0000318"/>
    <property type="project" value="GO_Central"/>
</dbReference>
<dbReference type="GO" id="GO:0008360">
    <property type="term" value="P:regulation of cell shape"/>
    <property type="evidence" value="ECO:0007669"/>
    <property type="project" value="UniProtKB-KW"/>
</dbReference>
<dbReference type="FunFam" id="3.30.1490.20:FF:000007">
    <property type="entry name" value="D-alanine--D-alanine ligase"/>
    <property type="match status" value="1"/>
</dbReference>
<dbReference type="FunFam" id="3.30.470.20:FF:000008">
    <property type="entry name" value="D-alanine--D-alanine ligase"/>
    <property type="match status" value="1"/>
</dbReference>
<dbReference type="Gene3D" id="3.40.50.20">
    <property type="match status" value="1"/>
</dbReference>
<dbReference type="Gene3D" id="3.30.1490.20">
    <property type="entry name" value="ATP-grasp fold, A domain"/>
    <property type="match status" value="1"/>
</dbReference>
<dbReference type="Gene3D" id="3.30.470.20">
    <property type="entry name" value="ATP-grasp fold, B domain"/>
    <property type="match status" value="1"/>
</dbReference>
<dbReference type="HAMAP" id="MF_00047">
    <property type="entry name" value="Dala_Dala_lig"/>
    <property type="match status" value="1"/>
</dbReference>
<dbReference type="InterPro" id="IPR011761">
    <property type="entry name" value="ATP-grasp"/>
</dbReference>
<dbReference type="InterPro" id="IPR013815">
    <property type="entry name" value="ATP_grasp_subdomain_1"/>
</dbReference>
<dbReference type="InterPro" id="IPR000291">
    <property type="entry name" value="D-Ala_lig_Van_CS"/>
</dbReference>
<dbReference type="InterPro" id="IPR005905">
    <property type="entry name" value="D_ala_D_ala"/>
</dbReference>
<dbReference type="InterPro" id="IPR011095">
    <property type="entry name" value="Dala_Dala_lig_C"/>
</dbReference>
<dbReference type="InterPro" id="IPR011127">
    <property type="entry name" value="Dala_Dala_lig_N"/>
</dbReference>
<dbReference type="InterPro" id="IPR016185">
    <property type="entry name" value="PreATP-grasp_dom_sf"/>
</dbReference>
<dbReference type="NCBIfam" id="TIGR01205">
    <property type="entry name" value="D_ala_D_alaTIGR"/>
    <property type="match status" value="1"/>
</dbReference>
<dbReference type="NCBIfam" id="NF002528">
    <property type="entry name" value="PRK01966.1-4"/>
    <property type="match status" value="1"/>
</dbReference>
<dbReference type="PANTHER" id="PTHR23132">
    <property type="entry name" value="D-ALANINE--D-ALANINE LIGASE"/>
    <property type="match status" value="1"/>
</dbReference>
<dbReference type="PANTHER" id="PTHR23132:SF25">
    <property type="entry name" value="D-ALANINE--D-ALANINE LIGASE A"/>
    <property type="match status" value="1"/>
</dbReference>
<dbReference type="Pfam" id="PF07478">
    <property type="entry name" value="Dala_Dala_lig_C"/>
    <property type="match status" value="1"/>
</dbReference>
<dbReference type="Pfam" id="PF01820">
    <property type="entry name" value="Dala_Dala_lig_N"/>
    <property type="match status" value="1"/>
</dbReference>
<dbReference type="PIRSF" id="PIRSF039102">
    <property type="entry name" value="Ddl/VanB"/>
    <property type="match status" value="1"/>
</dbReference>
<dbReference type="SUPFAM" id="SSF56059">
    <property type="entry name" value="Glutathione synthetase ATP-binding domain-like"/>
    <property type="match status" value="1"/>
</dbReference>
<dbReference type="SUPFAM" id="SSF52440">
    <property type="entry name" value="PreATP-grasp domain"/>
    <property type="match status" value="1"/>
</dbReference>
<dbReference type="PROSITE" id="PS50975">
    <property type="entry name" value="ATP_GRASP"/>
    <property type="match status" value="1"/>
</dbReference>
<dbReference type="PROSITE" id="PS00843">
    <property type="entry name" value="DALA_DALA_LIGASE_1"/>
    <property type="match status" value="1"/>
</dbReference>
<dbReference type="PROSITE" id="PS00844">
    <property type="entry name" value="DALA_DALA_LIGASE_2"/>
    <property type="match status" value="1"/>
</dbReference>
<organism>
    <name type="scientific">Bradyrhizobium diazoefficiens (strain JCM 10833 / BCRC 13528 / IAM 13628 / NBRC 14792 / USDA 110)</name>
    <dbReference type="NCBI Taxonomy" id="224911"/>
    <lineage>
        <taxon>Bacteria</taxon>
        <taxon>Pseudomonadati</taxon>
        <taxon>Pseudomonadota</taxon>
        <taxon>Alphaproteobacteria</taxon>
        <taxon>Hyphomicrobiales</taxon>
        <taxon>Nitrobacteraceae</taxon>
        <taxon>Bradyrhizobium</taxon>
    </lineage>
</organism>
<sequence length="373" mass="40799">MADKIRVVVLYGGRSGEHEVSLKSAASVFRHLDRTRFEVIPVSIDKTGRWQWNDLRSLDQAHAAALPILPDAPEMRLARGPDGRGVLVPITQGAAAPIAIDVVFPVIHGPLCEDGTVQGLLELADVAYVGSGVLASAVSMDKDVAKRLAEFAGIPVAPYRVLTRKAFVQDRVSSLAKAVEGLSLPVFVKPCNMGSSVGIHKVKTQDALEAALDDAFRYDVKVLVQQGIDAREIEVAVLEDETLFASLASELNPNAHHEFYSYEAKYLDPDGARVDLPARLDAAQMERVRSLATRVFAALECSGFARVDFFLDRKTGEFCFNEINTLPGFTSISMYPKMMEASGVPYGELLSRLVDLALDRHRQRQSLERGYAS</sequence>
<comment type="function">
    <text evidence="2">Cell wall formation.</text>
</comment>
<comment type="catalytic activity">
    <reaction evidence="2">
        <text>2 D-alanine + ATP = D-alanyl-D-alanine + ADP + phosphate + H(+)</text>
        <dbReference type="Rhea" id="RHEA:11224"/>
        <dbReference type="ChEBI" id="CHEBI:15378"/>
        <dbReference type="ChEBI" id="CHEBI:30616"/>
        <dbReference type="ChEBI" id="CHEBI:43474"/>
        <dbReference type="ChEBI" id="CHEBI:57416"/>
        <dbReference type="ChEBI" id="CHEBI:57822"/>
        <dbReference type="ChEBI" id="CHEBI:456216"/>
        <dbReference type="EC" id="6.3.2.4"/>
    </reaction>
</comment>
<comment type="cofactor">
    <cofactor evidence="1">
        <name>Mg(2+)</name>
        <dbReference type="ChEBI" id="CHEBI:18420"/>
    </cofactor>
    <cofactor evidence="1">
        <name>Mn(2+)</name>
        <dbReference type="ChEBI" id="CHEBI:29035"/>
    </cofactor>
    <text evidence="1">Binds 2 magnesium or manganese ions per subunit.</text>
</comment>
<comment type="pathway">
    <text evidence="2">Cell wall biogenesis; peptidoglycan biosynthesis.</text>
</comment>
<comment type="subcellular location">
    <subcellularLocation>
        <location evidence="2">Cytoplasm</location>
    </subcellularLocation>
</comment>
<comment type="similarity">
    <text evidence="2">Belongs to the D-alanine--D-alanine ligase family.</text>
</comment>
<keyword id="KW-0067">ATP-binding</keyword>
<keyword id="KW-0133">Cell shape</keyword>
<keyword id="KW-0961">Cell wall biogenesis/degradation</keyword>
<keyword id="KW-0963">Cytoplasm</keyword>
<keyword id="KW-0436">Ligase</keyword>
<keyword id="KW-0460">Magnesium</keyword>
<keyword id="KW-0464">Manganese</keyword>
<keyword id="KW-0479">Metal-binding</keyword>
<keyword id="KW-0547">Nucleotide-binding</keyword>
<keyword id="KW-0573">Peptidoglycan synthesis</keyword>
<keyword id="KW-1185">Reference proteome</keyword>
<evidence type="ECO:0000250" key="1"/>
<evidence type="ECO:0000255" key="2">
    <source>
        <dbReference type="HAMAP-Rule" id="MF_00047"/>
    </source>
</evidence>
<accession>Q89GA7</accession>
<feature type="chain" id="PRO_0000177792" description="D-alanine--D-alanine ligase A">
    <location>
        <begin position="1"/>
        <end position="373"/>
    </location>
</feature>
<feature type="domain" description="ATP-grasp" evidence="2">
    <location>
        <begin position="146"/>
        <end position="355"/>
    </location>
</feature>
<feature type="binding site" evidence="2">
    <location>
        <begin position="179"/>
        <end position="234"/>
    </location>
    <ligand>
        <name>ATP</name>
        <dbReference type="ChEBI" id="CHEBI:30616"/>
    </ligand>
</feature>
<feature type="binding site" evidence="2">
    <location>
        <position position="308"/>
    </location>
    <ligand>
        <name>Mg(2+)</name>
        <dbReference type="ChEBI" id="CHEBI:18420"/>
        <label>1</label>
    </ligand>
</feature>
<feature type="binding site" evidence="2">
    <location>
        <position position="322"/>
    </location>
    <ligand>
        <name>Mg(2+)</name>
        <dbReference type="ChEBI" id="CHEBI:18420"/>
        <label>1</label>
    </ligand>
</feature>
<feature type="binding site" evidence="2">
    <location>
        <position position="322"/>
    </location>
    <ligand>
        <name>Mg(2+)</name>
        <dbReference type="ChEBI" id="CHEBI:18420"/>
        <label>2</label>
    </ligand>
</feature>
<feature type="binding site" evidence="2">
    <location>
        <position position="324"/>
    </location>
    <ligand>
        <name>Mg(2+)</name>
        <dbReference type="ChEBI" id="CHEBI:18420"/>
        <label>2</label>
    </ligand>
</feature>
<name>DDLA_BRADU</name>
<proteinExistence type="inferred from homology"/>
<reference key="1">
    <citation type="journal article" date="2002" name="DNA Res.">
        <title>Complete genomic sequence of nitrogen-fixing symbiotic bacterium Bradyrhizobium japonicum USDA110.</title>
        <authorList>
            <person name="Kaneko T."/>
            <person name="Nakamura Y."/>
            <person name="Sato S."/>
            <person name="Minamisawa K."/>
            <person name="Uchiumi T."/>
            <person name="Sasamoto S."/>
            <person name="Watanabe A."/>
            <person name="Idesawa K."/>
            <person name="Iriguchi M."/>
            <person name="Kawashima K."/>
            <person name="Kohara M."/>
            <person name="Matsumoto M."/>
            <person name="Shimpo S."/>
            <person name="Tsuruoka H."/>
            <person name="Wada T."/>
            <person name="Yamada M."/>
            <person name="Tabata S."/>
        </authorList>
    </citation>
    <scope>NUCLEOTIDE SEQUENCE [LARGE SCALE GENOMIC DNA]</scope>
    <source>
        <strain>JCM 10833 / BCRC 13528 / IAM 13628 / NBRC 14792 / USDA 110</strain>
    </source>
</reference>
<protein>
    <recommendedName>
        <fullName evidence="2">D-alanine--D-alanine ligase A</fullName>
        <ecNumber evidence="2">6.3.2.4</ecNumber>
    </recommendedName>
    <alternativeName>
        <fullName evidence="2">D-Ala-D-Ala ligase A</fullName>
    </alternativeName>
    <alternativeName>
        <fullName>D-alanylalanine synthase A</fullName>
    </alternativeName>
</protein>
<gene>
    <name evidence="2" type="primary">ddlA</name>
    <name type="ordered locus">blr6438</name>
</gene>